<evidence type="ECO:0000250" key="1"/>
<evidence type="ECO:0000250" key="2">
    <source>
        <dbReference type="UniProtKB" id="Q02939"/>
    </source>
</evidence>
<evidence type="ECO:0000305" key="3"/>
<protein>
    <recommendedName>
        <fullName>General transcription and DNA repair factor IIH subunit TFB2</fullName>
        <shortName>TFIIH subunit TFB2</shortName>
    </recommendedName>
    <alternativeName>
        <fullName>RNA polymerase II transcription factor B subunit 2</fullName>
    </alternativeName>
</protein>
<proteinExistence type="inferred from homology"/>
<reference key="1">
    <citation type="journal article" date="2004" name="Nature">
        <title>Genome evolution in yeasts.</title>
        <authorList>
            <person name="Dujon B."/>
            <person name="Sherman D."/>
            <person name="Fischer G."/>
            <person name="Durrens P."/>
            <person name="Casaregola S."/>
            <person name="Lafontaine I."/>
            <person name="de Montigny J."/>
            <person name="Marck C."/>
            <person name="Neuveglise C."/>
            <person name="Talla E."/>
            <person name="Goffard N."/>
            <person name="Frangeul L."/>
            <person name="Aigle M."/>
            <person name="Anthouard V."/>
            <person name="Babour A."/>
            <person name="Barbe V."/>
            <person name="Barnay S."/>
            <person name="Blanchin S."/>
            <person name="Beckerich J.-M."/>
            <person name="Beyne E."/>
            <person name="Bleykasten C."/>
            <person name="Boisrame A."/>
            <person name="Boyer J."/>
            <person name="Cattolico L."/>
            <person name="Confanioleri F."/>
            <person name="de Daruvar A."/>
            <person name="Despons L."/>
            <person name="Fabre E."/>
            <person name="Fairhead C."/>
            <person name="Ferry-Dumazet H."/>
            <person name="Groppi A."/>
            <person name="Hantraye F."/>
            <person name="Hennequin C."/>
            <person name="Jauniaux N."/>
            <person name="Joyet P."/>
            <person name="Kachouri R."/>
            <person name="Kerrest A."/>
            <person name="Koszul R."/>
            <person name="Lemaire M."/>
            <person name="Lesur I."/>
            <person name="Ma L."/>
            <person name="Muller H."/>
            <person name="Nicaud J.-M."/>
            <person name="Nikolski M."/>
            <person name="Oztas S."/>
            <person name="Ozier-Kalogeropoulos O."/>
            <person name="Pellenz S."/>
            <person name="Potier S."/>
            <person name="Richard G.-F."/>
            <person name="Straub M.-L."/>
            <person name="Suleau A."/>
            <person name="Swennen D."/>
            <person name="Tekaia F."/>
            <person name="Wesolowski-Louvel M."/>
            <person name="Westhof E."/>
            <person name="Wirth B."/>
            <person name="Zeniou-Meyer M."/>
            <person name="Zivanovic Y."/>
            <person name="Bolotin-Fukuhara M."/>
            <person name="Thierry A."/>
            <person name="Bouchier C."/>
            <person name="Caudron B."/>
            <person name="Scarpelli C."/>
            <person name="Gaillardin C."/>
            <person name="Weissenbach J."/>
            <person name="Wincker P."/>
            <person name="Souciet J.-L."/>
        </authorList>
    </citation>
    <scope>NUCLEOTIDE SEQUENCE [LARGE SCALE GENOMIC DNA]</scope>
    <source>
        <strain>ATCC 2001 / BCRC 20586 / JCM 3761 / NBRC 0622 / NRRL Y-65 / CBS 138</strain>
    </source>
</reference>
<gene>
    <name type="primary">TFB2</name>
    <name type="ordered locus">CAGL0J06842g</name>
</gene>
<feature type="chain" id="PRO_0000119263" description="General transcription and DNA repair factor IIH subunit TFB2">
    <location>
        <begin position="1"/>
        <end position="504"/>
    </location>
</feature>
<keyword id="KW-0227">DNA damage</keyword>
<keyword id="KW-0234">DNA repair</keyword>
<keyword id="KW-0539">Nucleus</keyword>
<keyword id="KW-1185">Reference proteome</keyword>
<keyword id="KW-0804">Transcription</keyword>
<keyword id="KW-0805">Transcription regulation</keyword>
<dbReference type="EMBL" id="CR380956">
    <property type="protein sequence ID" value="CAG60954.1"/>
    <property type="molecule type" value="Genomic_DNA"/>
</dbReference>
<dbReference type="RefSeq" id="XP_448003.1">
    <property type="nucleotide sequence ID" value="XM_448003.1"/>
</dbReference>
<dbReference type="SMR" id="Q6FP41"/>
<dbReference type="FunCoup" id="Q6FP41">
    <property type="interactions" value="549"/>
</dbReference>
<dbReference type="STRING" id="284593.Q6FP41"/>
<dbReference type="EnsemblFungi" id="CAGL0J06842g-T">
    <property type="protein sequence ID" value="CAGL0J06842g-T-p1"/>
    <property type="gene ID" value="CAGL0J06842g"/>
</dbReference>
<dbReference type="KEGG" id="cgr:2889621"/>
<dbReference type="CGD" id="CAL0133724">
    <property type="gene designation" value="CAGL0J06842g"/>
</dbReference>
<dbReference type="VEuPathDB" id="FungiDB:CAGL0J06842g"/>
<dbReference type="eggNOG" id="KOG3471">
    <property type="taxonomic scope" value="Eukaryota"/>
</dbReference>
<dbReference type="HOGENOM" id="CLU_027280_4_0_1"/>
<dbReference type="InParanoid" id="Q6FP41"/>
<dbReference type="OMA" id="KGFIIIE"/>
<dbReference type="Proteomes" id="UP000002428">
    <property type="component" value="Chromosome J"/>
</dbReference>
<dbReference type="GO" id="GO:0000112">
    <property type="term" value="C:nucleotide-excision repair factor 3 complex"/>
    <property type="evidence" value="ECO:0007669"/>
    <property type="project" value="EnsemblFungi"/>
</dbReference>
<dbReference type="GO" id="GO:0000439">
    <property type="term" value="C:transcription factor TFIIH core complex"/>
    <property type="evidence" value="ECO:0007669"/>
    <property type="project" value="EnsemblFungi"/>
</dbReference>
<dbReference type="GO" id="GO:0005675">
    <property type="term" value="C:transcription factor TFIIH holo complex"/>
    <property type="evidence" value="ECO:0007669"/>
    <property type="project" value="EnsemblFungi"/>
</dbReference>
<dbReference type="GO" id="GO:0001671">
    <property type="term" value="F:ATPase activator activity"/>
    <property type="evidence" value="ECO:0007669"/>
    <property type="project" value="InterPro"/>
</dbReference>
<dbReference type="GO" id="GO:0003690">
    <property type="term" value="F:double-stranded DNA binding"/>
    <property type="evidence" value="ECO:0007669"/>
    <property type="project" value="EnsemblFungi"/>
</dbReference>
<dbReference type="GO" id="GO:0016251">
    <property type="term" value="F:RNA polymerase II general transcription initiation factor activity"/>
    <property type="evidence" value="ECO:0007669"/>
    <property type="project" value="EnsemblFungi"/>
</dbReference>
<dbReference type="GO" id="GO:0006289">
    <property type="term" value="P:nucleotide-excision repair"/>
    <property type="evidence" value="ECO:0007669"/>
    <property type="project" value="EnsemblFungi"/>
</dbReference>
<dbReference type="GO" id="GO:0006367">
    <property type="term" value="P:transcription initiation at RNA polymerase II promoter"/>
    <property type="evidence" value="ECO:0007669"/>
    <property type="project" value="EnsemblFungi"/>
</dbReference>
<dbReference type="FunFam" id="3.30.70.2610:FF:000001">
    <property type="entry name" value="General transcription factor IIH subunit 4"/>
    <property type="match status" value="1"/>
</dbReference>
<dbReference type="Gene3D" id="3.30.70.2610">
    <property type="match status" value="1"/>
</dbReference>
<dbReference type="InterPro" id="IPR040662">
    <property type="entry name" value="Tfb2_C"/>
</dbReference>
<dbReference type="InterPro" id="IPR004598">
    <property type="entry name" value="TFIIH_p52/Tfb2"/>
</dbReference>
<dbReference type="NCBIfam" id="TIGR00625">
    <property type="entry name" value="tfb2"/>
    <property type="match status" value="1"/>
</dbReference>
<dbReference type="PANTHER" id="PTHR13152:SF0">
    <property type="entry name" value="GENERAL TRANSCRIPTION FACTOR IIH SUBUNIT 4"/>
    <property type="match status" value="1"/>
</dbReference>
<dbReference type="PANTHER" id="PTHR13152">
    <property type="entry name" value="TFIIH, POLYPEPTIDE 4"/>
    <property type="match status" value="1"/>
</dbReference>
<dbReference type="Pfam" id="PF03849">
    <property type="entry name" value="Tfb2"/>
    <property type="match status" value="1"/>
</dbReference>
<dbReference type="Pfam" id="PF18307">
    <property type="entry name" value="Tfb2_C"/>
    <property type="match status" value="1"/>
</dbReference>
<accession>Q6FP41</accession>
<name>TFB2_CANGA</name>
<comment type="function">
    <text evidence="2">Component of the general transcription and DNA repair factor IIH (TFIIH) core complex, which is involved in general and transcription-coupled nucleotide excision repair (NER) of damaged DNA and, when complexed to TFIIK, in RNA transcription by RNA polymerase II. In NER, TFIIH acts by opening DNA around the lesion to allow the excision of the damaged oligonucleotide and its replacement by a new DNA fragment. In transcription, TFIIH has an essential role in transcription initiation. When the pre-initiation complex (PIC) has been established, TFIIH is required for promoter opening and promoter escape. Phosphorylation of the C-terminal tail (CTD) of the largest subunit of RNA polymerase II by the kinase module TFIIK controls the initiation of transcription.</text>
</comment>
<comment type="subunit">
    <text evidence="2">Component of the 7-subunit TFIIH core complex composed of XPB/SSL2, XPD/RAD3, SSL1, TFB1, TFB2, TFB4 and TFB5, which is active in NER. The core complex associates with the 3-subunit CTD-kinase module TFIIK composed of CCL1, KIN28 and TFB3 to form the 10-subunit holoenzyme (holo-TFIIH) active in transcription.</text>
</comment>
<comment type="subcellular location">
    <subcellularLocation>
        <location evidence="1">Nucleus</location>
    </subcellularLocation>
</comment>
<comment type="similarity">
    <text evidence="3">Belongs to the TFB2 family.</text>
</comment>
<organism>
    <name type="scientific">Candida glabrata (strain ATCC 2001 / BCRC 20586 / JCM 3761 / NBRC 0622 / NRRL Y-65 / CBS 138)</name>
    <name type="common">Yeast</name>
    <name type="synonym">Nakaseomyces glabratus</name>
    <dbReference type="NCBI Taxonomy" id="284593"/>
    <lineage>
        <taxon>Eukaryota</taxon>
        <taxon>Fungi</taxon>
        <taxon>Dikarya</taxon>
        <taxon>Ascomycota</taxon>
        <taxon>Saccharomycotina</taxon>
        <taxon>Saccharomycetes</taxon>
        <taxon>Saccharomycetales</taxon>
        <taxon>Saccharomycetaceae</taxon>
        <taxon>Nakaseomyces</taxon>
    </lineage>
</organism>
<sequence length="504" mass="57621">MSFSGLKHSITQYLEEIPSQVQTRLYKSPATCLAIYRLLPTLAKFFIMTVIFNDKDISLRDLDRWVKSNGKLQFQEAIKSMKSLHLLIPTRVNGQLLINLNPTFRESFRNALTGGEVNNSFGIVVDEDRLDTVVNLAVLDEYAATKWETILHFMVGTPMAKMPSENVLNLLKHSKLMEEVPDSSEFMITNEGFQFLLQEVNSQIWSLLLQYLKLAESLHMDPVHVLNFIFMLGALETGKAYSTENLSETQLKMLLDMRDYGLVFQKTSNPNIFYPTRLAQMLTSDTKSMRTASGAMESVLNKPDDAAKSTDDKYDSLEGKAEDIQDGALIIETNFKLYSYCNSPLQIAILSLFVHLKSRFANMVAGQITRESIRRALINGITADQVIAYLESHAHPQMRRLAEEKLQKKLELDPNCKDPLQVLPPTVVDQIKLWQLELDRVLTYEGSLYIDFDTAQDFNMLCKYAQDIGALLWKDDRKRKLFVSREGNAQVLEYAKRKIKKKEE</sequence>